<accession>P46496</accession>
<evidence type="ECO:0000250" key="1"/>
<evidence type="ECO:0000305" key="2"/>
<proteinExistence type="inferred from homology"/>
<sequence>MSVLEKPKKTAEQDWHRADILAELKKNGWSLRSLAKEGQVSYNTLKTVLDKSYPKMERLVANAIGVPPEVIWAGRFAERNKRPTLQHKY</sequence>
<organism>
    <name type="scientific">Haemophilus influenzae (strain ATCC 51907 / DSM 11121 / KW20 / Rd)</name>
    <dbReference type="NCBI Taxonomy" id="71421"/>
    <lineage>
        <taxon>Bacteria</taxon>
        <taxon>Pseudomonadati</taxon>
        <taxon>Pseudomonadota</taxon>
        <taxon>Gammaproteobacteria</taxon>
        <taxon>Pasteurellales</taxon>
        <taxon>Pasteurellaceae</taxon>
        <taxon>Haemophilus</taxon>
    </lineage>
</organism>
<feature type="chain" id="PRO_0000062785" description="Mu-like prophage FluMu DNA-binding protein Ner">
    <location>
        <begin position="1"/>
        <end position="89"/>
    </location>
</feature>
<feature type="DNA-binding region" description="H-T-H motif" evidence="1">
    <location>
        <begin position="57"/>
        <end position="76"/>
    </location>
</feature>
<keyword id="KW-0238">DNA-binding</keyword>
<keyword id="KW-1185">Reference proteome</keyword>
<keyword id="KW-0678">Repressor</keyword>
<keyword id="KW-0804">Transcription</keyword>
<keyword id="KW-0805">Transcription regulation</keyword>
<reference key="1">
    <citation type="journal article" date="1995" name="Science">
        <title>Whole-genome random sequencing and assembly of Haemophilus influenzae Rd.</title>
        <authorList>
            <person name="Fleischmann R.D."/>
            <person name="Adams M.D."/>
            <person name="White O."/>
            <person name="Clayton R.A."/>
            <person name="Kirkness E.F."/>
            <person name="Kerlavage A.R."/>
            <person name="Bult C.J."/>
            <person name="Tomb J.-F."/>
            <person name="Dougherty B.A."/>
            <person name="Merrick J.M."/>
            <person name="McKenney K."/>
            <person name="Sutton G.G."/>
            <person name="FitzHugh W."/>
            <person name="Fields C.A."/>
            <person name="Gocayne J.D."/>
            <person name="Scott J.D."/>
            <person name="Shirley R."/>
            <person name="Liu L.-I."/>
            <person name="Glodek A."/>
            <person name="Kelley J.M."/>
            <person name="Weidman J.F."/>
            <person name="Phillips C.A."/>
            <person name="Spriggs T."/>
            <person name="Hedblom E."/>
            <person name="Cotton M.D."/>
            <person name="Utterback T.R."/>
            <person name="Hanna M.C."/>
            <person name="Nguyen D.T."/>
            <person name="Saudek D.M."/>
            <person name="Brandon R.C."/>
            <person name="Fine L.D."/>
            <person name="Fritchman J.L."/>
            <person name="Fuhrmann J.L."/>
            <person name="Geoghagen N.S.M."/>
            <person name="Gnehm C.L."/>
            <person name="McDonald L.A."/>
            <person name="Small K.V."/>
            <person name="Fraser C.M."/>
            <person name="Smith H.O."/>
            <person name="Venter J.C."/>
        </authorList>
    </citation>
    <scope>NUCLEOTIDE SEQUENCE [LARGE SCALE GENOMIC DNA]</scope>
    <source>
        <strain>ATCC 51907 / DSM 11121 / KW20 / Rd</strain>
    </source>
</reference>
<comment type="function">
    <text evidence="1">Negative regulator of transcription starting from the Pe and Pc promoters of Mu. Also negatively regulates its own gene transcription (By similarity).</text>
</comment>
<comment type="similarity">
    <text evidence="2">Belongs to the ner transcriptional regulatory family.</text>
</comment>
<protein>
    <recommendedName>
        <fullName>Mu-like prophage FluMu DNA-binding protein Ner</fullName>
    </recommendedName>
</protein>
<dbReference type="EMBL" id="L42023">
    <property type="protein sequence ID" value="AAC23124.1"/>
    <property type="molecule type" value="Genomic_DNA"/>
</dbReference>
<dbReference type="RefSeq" id="NP_439628.1">
    <property type="nucleotide sequence ID" value="NC_000907.1"/>
</dbReference>
<dbReference type="SMR" id="P46496"/>
<dbReference type="STRING" id="71421.HI_1477"/>
<dbReference type="EnsemblBacteria" id="AAC23124">
    <property type="protein sequence ID" value="AAC23124"/>
    <property type="gene ID" value="HI_1477"/>
</dbReference>
<dbReference type="KEGG" id="hin:HI_1477"/>
<dbReference type="PATRIC" id="fig|71421.8.peg.1545"/>
<dbReference type="eggNOG" id="COG3423">
    <property type="taxonomic scope" value="Bacteria"/>
</dbReference>
<dbReference type="HOGENOM" id="CLU_162005_3_0_6"/>
<dbReference type="OrthoDB" id="5405994at2"/>
<dbReference type="PhylomeDB" id="P46496"/>
<dbReference type="BioCyc" id="HINF71421:G1GJ1-1502-MONOMER"/>
<dbReference type="Proteomes" id="UP000000579">
    <property type="component" value="Chromosome"/>
</dbReference>
<dbReference type="GO" id="GO:0003677">
    <property type="term" value="F:DNA binding"/>
    <property type="evidence" value="ECO:0007669"/>
    <property type="project" value="UniProtKB-KW"/>
</dbReference>
<dbReference type="Gene3D" id="1.10.260.40">
    <property type="entry name" value="lambda repressor-like DNA-binding domains"/>
    <property type="match status" value="1"/>
</dbReference>
<dbReference type="InterPro" id="IPR010982">
    <property type="entry name" value="Lambda_DNA-bd_dom_sf"/>
</dbReference>
<dbReference type="InterPro" id="IPR038722">
    <property type="entry name" value="Ner_HTH_dom"/>
</dbReference>
<dbReference type="Pfam" id="PF13693">
    <property type="entry name" value="HTH_35"/>
    <property type="match status" value="1"/>
</dbReference>
<dbReference type="SUPFAM" id="SSF47413">
    <property type="entry name" value="lambda repressor-like DNA-binding domains"/>
    <property type="match status" value="1"/>
</dbReference>
<gene>
    <name type="primary">nlp</name>
    <name type="ordered locus">HI_1477</name>
</gene>
<name>NER_HAEIN</name>